<feature type="chain" id="PRO_0000125420" description="Kinesin-like protein KIF2C">
    <location>
        <begin position="1"/>
        <end position="721"/>
    </location>
</feature>
<feature type="domain" description="Kinesin motor" evidence="4">
    <location>
        <begin position="254"/>
        <end position="584"/>
    </location>
</feature>
<feature type="region of interest" description="Globular" evidence="3">
    <location>
        <begin position="1"/>
        <end position="250"/>
    </location>
</feature>
<feature type="region of interest" description="Disordered" evidence="5">
    <location>
        <begin position="164"/>
        <end position="188"/>
    </location>
</feature>
<feature type="region of interest" description="Negative regulator of microtubule-binding">
    <location>
        <begin position="203"/>
        <end position="234"/>
    </location>
</feature>
<feature type="coiled-coil region" evidence="3">
    <location>
        <begin position="614"/>
        <end position="652"/>
    </location>
</feature>
<feature type="short sequence motif" description="Microtubule tip localization signal">
    <location>
        <begin position="95"/>
        <end position="98"/>
    </location>
</feature>
<feature type="compositionally biased region" description="Polar residues" evidence="5">
    <location>
        <begin position="171"/>
        <end position="182"/>
    </location>
</feature>
<feature type="binding site">
    <location>
        <position position="260"/>
    </location>
    <ligand>
        <name>ATP</name>
        <dbReference type="ChEBI" id="CHEBI:30616"/>
    </ligand>
</feature>
<feature type="binding site">
    <location>
        <begin position="344"/>
        <end position="351"/>
    </location>
    <ligand>
        <name>ATP</name>
        <dbReference type="ChEBI" id="CHEBI:30616"/>
    </ligand>
</feature>
<feature type="modified residue" description="Phosphoserine" evidence="2">
    <location>
        <position position="3"/>
    </location>
</feature>
<feature type="modified residue" description="Phosphoserine" evidence="2">
    <location>
        <position position="19"/>
    </location>
</feature>
<feature type="modified residue" description="Phosphoserine; by AURKB" evidence="2">
    <location>
        <position position="92"/>
    </location>
</feature>
<feature type="modified residue" description="Phosphoserine" evidence="1">
    <location>
        <position position="106"/>
    </location>
</feature>
<feature type="modified residue" description="Phosphoserine" evidence="1">
    <location>
        <position position="108"/>
    </location>
</feature>
<feature type="modified residue" description="Phosphoserine" evidence="1">
    <location>
        <position position="112"/>
    </location>
</feature>
<feature type="modified residue" description="Phosphoserine" evidence="2">
    <location>
        <position position="162"/>
    </location>
</feature>
<feature type="modified residue" description="Phosphoserine" evidence="2">
    <location>
        <position position="171"/>
    </location>
</feature>
<feature type="modified residue" description="Phosphoserine" evidence="2">
    <location>
        <position position="183"/>
    </location>
</feature>
<feature type="modified residue" description="Phosphoserine" evidence="1">
    <location>
        <position position="188"/>
    </location>
</feature>
<feature type="modified residue" description="Phosphoserine" evidence="2">
    <location>
        <position position="515"/>
    </location>
</feature>
<feature type="modified residue" description="Phosphoserine" evidence="2">
    <location>
        <position position="626"/>
    </location>
</feature>
<feature type="mutagenesis site" description="Loss of microtubule depolymerization activity." evidence="6">
    <original>K</original>
    <variation>A</variation>
    <location>
        <position position="293"/>
    </location>
</feature>
<feature type="mutagenesis site" description="Loss of microtubule depolymerization activity." evidence="6">
    <original>V</original>
    <variation>A</variation>
    <location>
        <position position="294"/>
    </location>
</feature>
<feature type="mutagenesis site" description="Loss of microtubule depolymerization activity." evidence="6">
    <original>D</original>
    <variation>A</variation>
    <location>
        <position position="295"/>
    </location>
</feature>
<feature type="helix" evidence="8">
    <location>
        <begin position="226"/>
        <end position="239"/>
    </location>
</feature>
<feature type="turn" evidence="8">
    <location>
        <begin position="243"/>
        <end position="247"/>
    </location>
</feature>
<feature type="strand" evidence="9">
    <location>
        <begin position="249"/>
        <end position="251"/>
    </location>
</feature>
<feature type="strand" evidence="8">
    <location>
        <begin position="255"/>
        <end position="261"/>
    </location>
</feature>
<feature type="helix" evidence="8">
    <location>
        <begin position="266"/>
        <end position="270"/>
    </location>
</feature>
<feature type="strand" evidence="8">
    <location>
        <begin position="281"/>
        <end position="292"/>
    </location>
</feature>
<feature type="strand" evidence="8">
    <location>
        <begin position="298"/>
        <end position="306"/>
    </location>
</feature>
<feature type="strand" evidence="8">
    <location>
        <begin position="308"/>
        <end position="311"/>
    </location>
</feature>
<feature type="helix" evidence="8">
    <location>
        <begin position="317"/>
        <end position="323"/>
    </location>
</feature>
<feature type="helix" evidence="8">
    <location>
        <begin position="326"/>
        <end position="328"/>
    </location>
</feature>
<feature type="helix" evidence="8">
    <location>
        <begin position="329"/>
        <end position="333"/>
    </location>
</feature>
<feature type="strand" evidence="8">
    <location>
        <begin position="337"/>
        <end position="345"/>
    </location>
</feature>
<feature type="helix" evidence="8">
    <location>
        <begin position="350"/>
        <end position="355"/>
    </location>
</feature>
<feature type="helix" evidence="8">
    <location>
        <begin position="365"/>
        <end position="367"/>
    </location>
</feature>
<feature type="helix" evidence="8">
    <location>
        <begin position="369"/>
        <end position="381"/>
    </location>
</feature>
<feature type="helix" evidence="8">
    <location>
        <begin position="384"/>
        <end position="387"/>
    </location>
</feature>
<feature type="strand" evidence="8">
    <location>
        <begin position="392"/>
        <end position="401"/>
    </location>
</feature>
<feature type="strand" evidence="8">
    <location>
        <begin position="404"/>
        <end position="407"/>
    </location>
</feature>
<feature type="turn" evidence="8">
    <location>
        <begin position="408"/>
        <end position="412"/>
    </location>
</feature>
<feature type="strand" evidence="8">
    <location>
        <begin position="414"/>
        <end position="419"/>
    </location>
</feature>
<feature type="strand" evidence="7">
    <location>
        <begin position="421"/>
        <end position="423"/>
    </location>
</feature>
<feature type="strand" evidence="8">
    <location>
        <begin position="425"/>
        <end position="428"/>
    </location>
</feature>
<feature type="strand" evidence="8">
    <location>
        <begin position="433"/>
        <end position="437"/>
    </location>
</feature>
<feature type="helix" evidence="8">
    <location>
        <begin position="438"/>
        <end position="450"/>
    </location>
</feature>
<feature type="strand" evidence="8">
    <location>
        <begin position="465"/>
        <end position="488"/>
    </location>
</feature>
<feature type="helix" evidence="7">
    <location>
        <begin position="506"/>
        <end position="508"/>
    </location>
</feature>
<feature type="helix" evidence="8">
    <location>
        <begin position="509"/>
        <end position="526"/>
    </location>
</feature>
<feature type="helix" evidence="8">
    <location>
        <begin position="539"/>
        <end position="543"/>
    </location>
</feature>
<feature type="helix" evidence="8">
    <location>
        <begin position="546"/>
        <end position="549"/>
    </location>
</feature>
<feature type="strand" evidence="8">
    <location>
        <begin position="550"/>
        <end position="561"/>
    </location>
</feature>
<feature type="helix" evidence="8">
    <location>
        <begin position="565"/>
        <end position="567"/>
    </location>
</feature>
<feature type="helix" evidence="8">
    <location>
        <begin position="568"/>
        <end position="582"/>
    </location>
</feature>
<evidence type="ECO:0000250" key="1">
    <source>
        <dbReference type="UniProtKB" id="P70096"/>
    </source>
</evidence>
<evidence type="ECO:0000250" key="2">
    <source>
        <dbReference type="UniProtKB" id="Q99661"/>
    </source>
</evidence>
<evidence type="ECO:0000255" key="3"/>
<evidence type="ECO:0000255" key="4">
    <source>
        <dbReference type="PROSITE-ProRule" id="PRU00283"/>
    </source>
</evidence>
<evidence type="ECO:0000256" key="5">
    <source>
        <dbReference type="SAM" id="MobiDB-lite"/>
    </source>
</evidence>
<evidence type="ECO:0000269" key="6">
    <source>
    </source>
</evidence>
<evidence type="ECO:0007829" key="7">
    <source>
        <dbReference type="PDB" id="1V8J"/>
    </source>
</evidence>
<evidence type="ECO:0007829" key="8">
    <source>
        <dbReference type="PDB" id="1V8K"/>
    </source>
</evidence>
<evidence type="ECO:0007829" key="9">
    <source>
        <dbReference type="PDB" id="5XJB"/>
    </source>
</evidence>
<organism>
    <name type="scientific">Mus musculus</name>
    <name type="common">Mouse</name>
    <dbReference type="NCBI Taxonomy" id="10090"/>
    <lineage>
        <taxon>Eukaryota</taxon>
        <taxon>Metazoa</taxon>
        <taxon>Chordata</taxon>
        <taxon>Craniata</taxon>
        <taxon>Vertebrata</taxon>
        <taxon>Euteleostomi</taxon>
        <taxon>Mammalia</taxon>
        <taxon>Eutheria</taxon>
        <taxon>Euarchontoglires</taxon>
        <taxon>Glires</taxon>
        <taxon>Rodentia</taxon>
        <taxon>Myomorpha</taxon>
        <taxon>Muroidea</taxon>
        <taxon>Muridae</taxon>
        <taxon>Murinae</taxon>
        <taxon>Mus</taxon>
        <taxon>Mus</taxon>
    </lineage>
</organism>
<protein>
    <recommendedName>
        <fullName>Kinesin-like protein KIF2C</fullName>
    </recommendedName>
    <alternativeName>
        <fullName>Mitotic centromere-associated kinesin</fullName>
        <shortName>MCAK</shortName>
    </alternativeName>
</protein>
<proteinExistence type="evidence at protein level"/>
<reference key="1">
    <citation type="journal article" date="2009" name="PLoS Biol.">
        <title>Lineage-specific biology revealed by a finished genome assembly of the mouse.</title>
        <authorList>
            <person name="Church D.M."/>
            <person name="Goodstadt L."/>
            <person name="Hillier L.W."/>
            <person name="Zody M.C."/>
            <person name="Goldstein S."/>
            <person name="She X."/>
            <person name="Bult C.J."/>
            <person name="Agarwala R."/>
            <person name="Cherry J.L."/>
            <person name="DiCuccio M."/>
            <person name="Hlavina W."/>
            <person name="Kapustin Y."/>
            <person name="Meric P."/>
            <person name="Maglott D."/>
            <person name="Birtle Z."/>
            <person name="Marques A.C."/>
            <person name="Graves T."/>
            <person name="Zhou S."/>
            <person name="Teague B."/>
            <person name="Potamousis K."/>
            <person name="Churas C."/>
            <person name="Place M."/>
            <person name="Herschleb J."/>
            <person name="Runnheim R."/>
            <person name="Forrest D."/>
            <person name="Amos-Landgraf J."/>
            <person name="Schwartz D.C."/>
            <person name="Cheng Z."/>
            <person name="Lindblad-Toh K."/>
            <person name="Eichler E.E."/>
            <person name="Ponting C.P."/>
        </authorList>
    </citation>
    <scope>NUCLEOTIDE SEQUENCE [LARGE SCALE GENOMIC DNA]</scope>
    <source>
        <strain>C57BL/6J</strain>
    </source>
</reference>
<reference key="2">
    <citation type="journal article" date="2004" name="Genome Res.">
        <title>The status, quality, and expansion of the NIH full-length cDNA project: the Mammalian Gene Collection (MGC).</title>
        <authorList>
            <consortium name="The MGC Project Team"/>
        </authorList>
    </citation>
    <scope>NUCLEOTIDE SEQUENCE [LARGE SCALE MRNA]</scope>
</reference>
<reference key="3">
    <citation type="journal article" date="2004" name="Cell">
        <title>A common mechanism for microtubule destabilizers-M type kinesins stabilize curling of the protofilament using the class-specific neck and loops.</title>
        <authorList>
            <person name="Ogawa T."/>
            <person name="Nitta R."/>
            <person name="Okada Y."/>
            <person name="Hirokawa N."/>
        </authorList>
    </citation>
    <scope>X-RAY CRYSTALLOGRAPHY (2.25 ANGSTROMS) OF 183-585 IN COMPLEX WITH ADP AND ATP ANALOG</scope>
    <scope>FUNCTION</scope>
    <scope>MUTAGENESIS OF LYS-293; VAL-294 AND ASP-295</scope>
</reference>
<comment type="function">
    <text evidence="2 6">In complex with KIF18B, constitutes the major microtubule plus-end depolymerizing activity in mitotic cells (PubMed:14980225). Regulates the turnover of microtubules at the kinetochore and functions in chromosome segregation during mitosis. Plays a role in chromosome congression and is required for the lateral to end-on conversion of the chromosome-microtubule attachment (By similarity).</text>
</comment>
<comment type="subunit">
    <text evidence="2">Interacts with CENPH. Interacts with MTUS2/TIP150; the interaction is direct. Interacts with MAPRE1; the interaction is direct, regulated by phosphorylation and is probably required for targeting to growing microtubule plus ends. Interacts with KIF18B at microtubule tips; this interaction increases the affinity of both partners for microtubule plus ends and is required for robust microtubule depolymerization. Phosphorylation by AURKA or AURKB strongly reduces KIF18B-binding.</text>
</comment>
<comment type="subcellular location">
    <subcellularLocation>
        <location evidence="2">Cytoplasm</location>
        <location evidence="2">Cytoskeleton</location>
    </subcellularLocation>
    <subcellularLocation>
        <location evidence="1">Nucleus</location>
    </subcellularLocation>
    <subcellularLocation>
        <location evidence="2">Chromosome</location>
        <location evidence="2">Centromere</location>
    </subcellularLocation>
    <subcellularLocation>
        <location evidence="2">Chromosome</location>
        <location evidence="2">Centromere</location>
        <location evidence="2">Kinetochore</location>
    </subcellularLocation>
    <text evidence="1 2">Associates with the microtubule network at the growing distal tip (the plus-end) of microtubules, probably through interaction with MTUS2/TIP150 and MAPRE1. Association with microtubule plus ends is also mediated by interaction with KIF18B. Centromeric localization requires the presence of BUB1 and SGO2A.</text>
</comment>
<comment type="domain">
    <text evidence="2">The microtubule tip localization signal (MtLS) motif; mediates interaction with MAPRE1 and targeting to the growing microtubule plus ends.</text>
</comment>
<comment type="PTM">
    <text evidence="2">Phosphorylation by AURKB, regulates association with centromeres and kinetochores and the microtubule depolymerization activity.</text>
</comment>
<comment type="PTM">
    <text evidence="2">Ubiquitinated.</text>
</comment>
<comment type="similarity">
    <text evidence="4">Belongs to the TRAFAC class myosin-kinesin ATPase superfamily. Kinesin family. MCAK/KIF2 subfamily.</text>
</comment>
<name>KIF2C_MOUSE</name>
<dbReference type="EMBL" id="AL671866">
    <property type="status" value="NOT_ANNOTATED_CDS"/>
    <property type="molecule type" value="Genomic_DNA"/>
</dbReference>
<dbReference type="EMBL" id="BC006841">
    <property type="protein sequence ID" value="AAH06841.1"/>
    <property type="molecule type" value="mRNA"/>
</dbReference>
<dbReference type="CCDS" id="CCDS18531.1"/>
<dbReference type="RefSeq" id="NP_608301.3">
    <property type="nucleotide sequence ID" value="NM_134471.4"/>
</dbReference>
<dbReference type="PDB" id="1V8J">
    <property type="method" value="X-ray"/>
    <property type="resolution" value="3.24 A"/>
    <property type="chains" value="A=183-585"/>
</dbReference>
<dbReference type="PDB" id="1V8K">
    <property type="method" value="X-ray"/>
    <property type="resolution" value="2.25 A"/>
    <property type="chains" value="A=183-585"/>
</dbReference>
<dbReference type="PDB" id="3EDL">
    <property type="method" value="EM"/>
    <property type="resolution" value="28.00 A"/>
    <property type="chains" value="D=255-585"/>
</dbReference>
<dbReference type="PDB" id="5XJA">
    <property type="method" value="X-ray"/>
    <property type="resolution" value="3.43 A"/>
    <property type="chains" value="A/B=183-585"/>
</dbReference>
<dbReference type="PDB" id="5XJB">
    <property type="method" value="X-ray"/>
    <property type="resolution" value="3.10 A"/>
    <property type="chains" value="A/B=184-585"/>
</dbReference>
<dbReference type="PDBsum" id="1V8J"/>
<dbReference type="PDBsum" id="1V8K"/>
<dbReference type="PDBsum" id="3EDL"/>
<dbReference type="PDBsum" id="5XJA"/>
<dbReference type="PDBsum" id="5XJB"/>
<dbReference type="SMR" id="Q922S8"/>
<dbReference type="BioGRID" id="216265">
    <property type="interactions" value="23"/>
</dbReference>
<dbReference type="FunCoup" id="Q922S8">
    <property type="interactions" value="1176"/>
</dbReference>
<dbReference type="IntAct" id="Q922S8">
    <property type="interactions" value="13"/>
</dbReference>
<dbReference type="STRING" id="10090.ENSMUSP00000064261"/>
<dbReference type="iPTMnet" id="Q922S8"/>
<dbReference type="PhosphoSitePlus" id="Q922S8"/>
<dbReference type="jPOST" id="Q922S8"/>
<dbReference type="PaxDb" id="10090-ENSMUSP00000064261"/>
<dbReference type="ProteomicsDB" id="263604"/>
<dbReference type="Pumba" id="Q922S8"/>
<dbReference type="Antibodypedia" id="1212">
    <property type="antibodies" value="496 antibodies from 34 providers"/>
</dbReference>
<dbReference type="DNASU" id="73804"/>
<dbReference type="Ensembl" id="ENSMUST00000065896.9">
    <property type="protein sequence ID" value="ENSMUSP00000064261.3"/>
    <property type="gene ID" value="ENSMUSG00000028678.14"/>
</dbReference>
<dbReference type="GeneID" id="73804"/>
<dbReference type="KEGG" id="mmu:73804"/>
<dbReference type="UCSC" id="uc008uie.3">
    <property type="organism name" value="mouse"/>
</dbReference>
<dbReference type="AGR" id="MGI:1921054"/>
<dbReference type="CTD" id="11004"/>
<dbReference type="MGI" id="MGI:1921054">
    <property type="gene designation" value="Kif2c"/>
</dbReference>
<dbReference type="VEuPathDB" id="HostDB:ENSMUSG00000028678"/>
<dbReference type="eggNOG" id="KOG0246">
    <property type="taxonomic scope" value="Eukaryota"/>
</dbReference>
<dbReference type="GeneTree" id="ENSGT00940000154046"/>
<dbReference type="InParanoid" id="Q922S8"/>
<dbReference type="OMA" id="RTTLECH"/>
<dbReference type="OrthoDB" id="3176171at2759"/>
<dbReference type="PhylomeDB" id="Q922S8"/>
<dbReference type="TreeFam" id="TF105222"/>
<dbReference type="Reactome" id="R-MMU-141444">
    <property type="pathway name" value="Amplification of signal from unattached kinetochores via a MAD2 inhibitory signal"/>
</dbReference>
<dbReference type="Reactome" id="R-MMU-2132295">
    <property type="pathway name" value="MHC class II antigen presentation"/>
</dbReference>
<dbReference type="Reactome" id="R-MMU-2467813">
    <property type="pathway name" value="Separation of Sister Chromatids"/>
</dbReference>
<dbReference type="Reactome" id="R-MMU-2500257">
    <property type="pathway name" value="Resolution of Sister Chromatid Cohesion"/>
</dbReference>
<dbReference type="Reactome" id="R-MMU-5663220">
    <property type="pathway name" value="RHO GTPases Activate Formins"/>
</dbReference>
<dbReference type="Reactome" id="R-MMU-6811434">
    <property type="pathway name" value="COPI-dependent Golgi-to-ER retrograde traffic"/>
</dbReference>
<dbReference type="Reactome" id="R-MMU-68877">
    <property type="pathway name" value="Mitotic Prometaphase"/>
</dbReference>
<dbReference type="Reactome" id="R-MMU-9648025">
    <property type="pathway name" value="EML4 and NUDC in mitotic spindle formation"/>
</dbReference>
<dbReference type="Reactome" id="R-MMU-983189">
    <property type="pathway name" value="Kinesins"/>
</dbReference>
<dbReference type="BioGRID-ORCS" id="73804">
    <property type="hits" value="9 hits in 80 CRISPR screens"/>
</dbReference>
<dbReference type="CD-CODE" id="CE726F99">
    <property type="entry name" value="Postsynaptic density"/>
</dbReference>
<dbReference type="ChiTaRS" id="Kif2c">
    <property type="organism name" value="mouse"/>
</dbReference>
<dbReference type="EvolutionaryTrace" id="Q922S8"/>
<dbReference type="PRO" id="PR:Q922S8"/>
<dbReference type="Proteomes" id="UP000000589">
    <property type="component" value="Chromosome 4"/>
</dbReference>
<dbReference type="RNAct" id="Q922S8">
    <property type="molecule type" value="protein"/>
</dbReference>
<dbReference type="Bgee" id="ENSMUSG00000028678">
    <property type="expression patterns" value="Expressed in otic placode and 202 other cell types or tissues"/>
</dbReference>
<dbReference type="ExpressionAtlas" id="Q922S8">
    <property type="expression patterns" value="baseline and differential"/>
</dbReference>
<dbReference type="GO" id="GO:0000775">
    <property type="term" value="C:chromosome, centromeric region"/>
    <property type="evidence" value="ECO:0000314"/>
    <property type="project" value="MGI"/>
</dbReference>
<dbReference type="GO" id="GO:0005737">
    <property type="term" value="C:cytoplasm"/>
    <property type="evidence" value="ECO:0007669"/>
    <property type="project" value="UniProtKB-KW"/>
</dbReference>
<dbReference type="GO" id="GO:0098978">
    <property type="term" value="C:glutamatergic synapse"/>
    <property type="evidence" value="ECO:0000314"/>
    <property type="project" value="SynGO"/>
</dbReference>
<dbReference type="GO" id="GO:0000776">
    <property type="term" value="C:kinetochore"/>
    <property type="evidence" value="ECO:0000250"/>
    <property type="project" value="UniProtKB"/>
</dbReference>
<dbReference type="GO" id="GO:0035371">
    <property type="term" value="C:microtubule plus-end"/>
    <property type="evidence" value="ECO:0000250"/>
    <property type="project" value="UniProtKB"/>
</dbReference>
<dbReference type="GO" id="GO:0005634">
    <property type="term" value="C:nucleus"/>
    <property type="evidence" value="ECO:0007669"/>
    <property type="project" value="UniProtKB-SubCell"/>
</dbReference>
<dbReference type="GO" id="GO:0098794">
    <property type="term" value="C:postsynapse"/>
    <property type="evidence" value="ECO:0000314"/>
    <property type="project" value="SynGO"/>
</dbReference>
<dbReference type="GO" id="GO:0098793">
    <property type="term" value="C:presynapse"/>
    <property type="evidence" value="ECO:0000314"/>
    <property type="project" value="SynGO"/>
</dbReference>
<dbReference type="GO" id="GO:0005524">
    <property type="term" value="F:ATP binding"/>
    <property type="evidence" value="ECO:0007669"/>
    <property type="project" value="UniProtKB-KW"/>
</dbReference>
<dbReference type="GO" id="GO:0003777">
    <property type="term" value="F:microtubule motor activity"/>
    <property type="evidence" value="ECO:0007669"/>
    <property type="project" value="InterPro"/>
</dbReference>
<dbReference type="GO" id="GO:0051010">
    <property type="term" value="F:microtubule plus-end binding"/>
    <property type="evidence" value="ECO:0000250"/>
    <property type="project" value="UniProtKB"/>
</dbReference>
<dbReference type="GO" id="GO:0051315">
    <property type="term" value="P:attachment of mitotic spindle microtubules to kinetochore"/>
    <property type="evidence" value="ECO:0000250"/>
    <property type="project" value="UniProtKB"/>
</dbReference>
<dbReference type="GO" id="GO:0051301">
    <property type="term" value="P:cell division"/>
    <property type="evidence" value="ECO:0007669"/>
    <property type="project" value="UniProtKB-KW"/>
</dbReference>
<dbReference type="GO" id="GO:0030951">
    <property type="term" value="P:establishment or maintenance of microtubule cytoskeleton polarity"/>
    <property type="evidence" value="ECO:0007669"/>
    <property type="project" value="Ensembl"/>
</dbReference>
<dbReference type="GO" id="GO:0051310">
    <property type="term" value="P:metaphase chromosome alignment"/>
    <property type="evidence" value="ECO:0000250"/>
    <property type="project" value="UniProtKB"/>
</dbReference>
<dbReference type="GO" id="GO:0007019">
    <property type="term" value="P:microtubule depolymerization"/>
    <property type="evidence" value="ECO:0007669"/>
    <property type="project" value="Ensembl"/>
</dbReference>
<dbReference type="GO" id="GO:0007018">
    <property type="term" value="P:microtubule-based movement"/>
    <property type="evidence" value="ECO:0007669"/>
    <property type="project" value="InterPro"/>
</dbReference>
<dbReference type="GO" id="GO:0007080">
    <property type="term" value="P:mitotic metaphase chromosome alignment"/>
    <property type="evidence" value="ECO:0000250"/>
    <property type="project" value="UniProtKB"/>
</dbReference>
<dbReference type="GO" id="GO:0099188">
    <property type="term" value="P:postsynaptic cytoskeleton organization"/>
    <property type="evidence" value="ECO:0000314"/>
    <property type="project" value="SynGO"/>
</dbReference>
<dbReference type="GO" id="GO:0051983">
    <property type="term" value="P:regulation of chromosome segregation"/>
    <property type="evidence" value="ECO:0007669"/>
    <property type="project" value="Ensembl"/>
</dbReference>
<dbReference type="GO" id="GO:0098696">
    <property type="term" value="P:regulation of neurotransmitter receptor localization to postsynaptic specialization membrane"/>
    <property type="evidence" value="ECO:0000314"/>
    <property type="project" value="SynGO"/>
</dbReference>
<dbReference type="CDD" id="cd01367">
    <property type="entry name" value="KISc_KIF2_like"/>
    <property type="match status" value="1"/>
</dbReference>
<dbReference type="FunFam" id="3.40.850.10:FF:000006">
    <property type="entry name" value="Kinesin-like protein"/>
    <property type="match status" value="1"/>
</dbReference>
<dbReference type="Gene3D" id="3.40.850.10">
    <property type="entry name" value="Kinesin motor domain"/>
    <property type="match status" value="1"/>
</dbReference>
<dbReference type="InterPro" id="IPR054473">
    <property type="entry name" value="KIF2A-like_N"/>
</dbReference>
<dbReference type="InterPro" id="IPR027640">
    <property type="entry name" value="Kinesin-like_fam"/>
</dbReference>
<dbReference type="InterPro" id="IPR019821">
    <property type="entry name" value="Kinesin_motor_CS"/>
</dbReference>
<dbReference type="InterPro" id="IPR001752">
    <property type="entry name" value="Kinesin_motor_dom"/>
</dbReference>
<dbReference type="InterPro" id="IPR036961">
    <property type="entry name" value="Kinesin_motor_dom_sf"/>
</dbReference>
<dbReference type="InterPro" id="IPR027417">
    <property type="entry name" value="P-loop_NTPase"/>
</dbReference>
<dbReference type="PANTHER" id="PTHR47971:SF25">
    <property type="entry name" value="KINESIN-LIKE PROTEIN KIF2C"/>
    <property type="match status" value="1"/>
</dbReference>
<dbReference type="PANTHER" id="PTHR47971">
    <property type="entry name" value="KINESIN-RELATED PROTEIN 6"/>
    <property type="match status" value="1"/>
</dbReference>
<dbReference type="Pfam" id="PF22923">
    <property type="entry name" value="KIF2A-like_1st"/>
    <property type="match status" value="1"/>
</dbReference>
<dbReference type="Pfam" id="PF00225">
    <property type="entry name" value="Kinesin"/>
    <property type="match status" value="1"/>
</dbReference>
<dbReference type="PRINTS" id="PR00380">
    <property type="entry name" value="KINESINHEAVY"/>
</dbReference>
<dbReference type="SMART" id="SM00129">
    <property type="entry name" value="KISc"/>
    <property type="match status" value="1"/>
</dbReference>
<dbReference type="SUPFAM" id="SSF52540">
    <property type="entry name" value="P-loop containing nucleoside triphosphate hydrolases"/>
    <property type="match status" value="1"/>
</dbReference>
<dbReference type="PROSITE" id="PS00411">
    <property type="entry name" value="KINESIN_MOTOR_1"/>
    <property type="match status" value="1"/>
</dbReference>
<dbReference type="PROSITE" id="PS50067">
    <property type="entry name" value="KINESIN_MOTOR_2"/>
    <property type="match status" value="1"/>
</dbReference>
<gene>
    <name type="primary">Kif2c</name>
</gene>
<accession>Q922S8</accession>
<accession>A2AE71</accession>
<sequence length="721" mass="81085">MESLHARLFPGLSINIQRSNGLIHPANISTVNVEKSCVSVEWIEGGTTKGKEIDIDDVAAINPELLQLLPLRPKDSLPLQENVTVPKQKRKSVNSKIPALKEGLRSRSTRMSTVSEVRIPAQENEMEVELPVPTNSRKQFAIPSHPRASCSTVTELPLLMVSEEAEEQAHSTRSTSSANPGNSVRRKSCIVKEMEKMKNKREEKRAQNSELRIKRAQEYDSSFPNWEFARMIKEFRVTMECSPLTVTDPIEEHRICVCVRKRPLNKQELAKKEIDVISVPSKCLLLVHEPKLKVDLTKYLENQAFCFDFAFDETASNEVVYRFTARPLVQTIFEGGKATCFAYGQTGSGKTHTMGGDLSGKSQNASKGIYAMASRDVFLLKNQPRYRNLNLEVYVTFFEIYNGKVFDLLNKKAKLRVLEDSRQQVQVVGLQEYLVTCADDVIKMINMGSACRTSGQTFANSNSSRSHACFQILLRTKGRLHGKFSLVDLAGNERGADTSSADRQTRMEGAEINKSLLALKECIRALGQNKAHTPFRESKLTQVLRDSFIGENSRTCMIAMISPGISSCEYTLNTLRYADRVKELSPHSGPSGEQPVQMETEVMEASSNGTSLTGNEEEELSSQMSSFNEAMTQIRELEERALEELREIIQQGPNWLELSEMTDQPDYDLETFVNKAESALTQQAKQAKHFSALREVIKALRLAMQLEEQASKQINSKKRHQ</sequence>
<keyword id="KW-0002">3D-structure</keyword>
<keyword id="KW-0067">ATP-binding</keyword>
<keyword id="KW-0131">Cell cycle</keyword>
<keyword id="KW-0132">Cell division</keyword>
<keyword id="KW-0137">Centromere</keyword>
<keyword id="KW-0158">Chromosome</keyword>
<keyword id="KW-0159">Chromosome partition</keyword>
<keyword id="KW-0175">Coiled coil</keyword>
<keyword id="KW-0963">Cytoplasm</keyword>
<keyword id="KW-0206">Cytoskeleton</keyword>
<keyword id="KW-0995">Kinetochore</keyword>
<keyword id="KW-0493">Microtubule</keyword>
<keyword id="KW-0498">Mitosis</keyword>
<keyword id="KW-0547">Nucleotide-binding</keyword>
<keyword id="KW-0539">Nucleus</keyword>
<keyword id="KW-0597">Phosphoprotein</keyword>
<keyword id="KW-1185">Reference proteome</keyword>
<keyword id="KW-0832">Ubl conjugation</keyword>